<gene>
    <name evidence="1" type="primary">atpF</name>
</gene>
<proteinExistence type="inferred from homology"/>
<name>ATPF_PELHO</name>
<geneLocation type="chloroplast"/>
<accession>Q06FX5</accession>
<reference key="1">
    <citation type="journal article" date="2006" name="Mol. Biol. Evol.">
        <title>The complete chloroplast genome sequence of Pelargonium x hortorum: organization and evolution of the largest and most highly rearranged chloroplast genome of land plants.</title>
        <authorList>
            <person name="Chumley T.W."/>
            <person name="Palmer J.D."/>
            <person name="Mower J.P."/>
            <person name="Fourcade H.M."/>
            <person name="Calie P.J."/>
            <person name="Boore J.L."/>
            <person name="Jansen R.K."/>
        </authorList>
    </citation>
    <scope>NUCLEOTIDE SEQUENCE [LARGE SCALE GENOMIC DNA]</scope>
    <source>
        <strain>cv. Ringo White</strain>
    </source>
</reference>
<protein>
    <recommendedName>
        <fullName evidence="1">ATP synthase subunit b, chloroplastic</fullName>
    </recommendedName>
    <alternativeName>
        <fullName evidence="1">ATP synthase F(0) sector subunit b</fullName>
    </alternativeName>
    <alternativeName>
        <fullName evidence="1">ATPase subunit I</fullName>
    </alternativeName>
</protein>
<sequence length="184" mass="21207">MKNVTDSFVSLGRWPSAGSFGLNTDILATNPINLSVVLGVLIFFGKGVLNDLLDNRKQRILNTIRNSEELRGGAIEQLEKARARLRKVKTEAARFRVNQYSEAEREKLNLINLTYKSLEDFENYKNDSIRFEQQRAIHQVRQRVFQQALRGALETLNSCLNKELHLRTISANIRLFRSMKELTN</sequence>
<organism>
    <name type="scientific">Pelargonium hortorum</name>
    <name type="common">Common geranium</name>
    <name type="synonym">Pelargonium inquinans x Pelargonium zonale</name>
    <dbReference type="NCBI Taxonomy" id="4031"/>
    <lineage>
        <taxon>Eukaryota</taxon>
        <taxon>Viridiplantae</taxon>
        <taxon>Streptophyta</taxon>
        <taxon>Embryophyta</taxon>
        <taxon>Tracheophyta</taxon>
        <taxon>Spermatophyta</taxon>
        <taxon>Magnoliopsida</taxon>
        <taxon>eudicotyledons</taxon>
        <taxon>Gunneridae</taxon>
        <taxon>Pentapetalae</taxon>
        <taxon>rosids</taxon>
        <taxon>malvids</taxon>
        <taxon>Geraniales</taxon>
        <taxon>Geraniaceae</taxon>
        <taxon>Pelargonium</taxon>
    </lineage>
</organism>
<keyword id="KW-0066">ATP synthesis</keyword>
<keyword id="KW-0138">CF(0)</keyword>
<keyword id="KW-0150">Chloroplast</keyword>
<keyword id="KW-0375">Hydrogen ion transport</keyword>
<keyword id="KW-0406">Ion transport</keyword>
<keyword id="KW-0472">Membrane</keyword>
<keyword id="KW-0934">Plastid</keyword>
<keyword id="KW-0793">Thylakoid</keyword>
<keyword id="KW-0812">Transmembrane</keyword>
<keyword id="KW-1133">Transmembrane helix</keyword>
<keyword id="KW-0813">Transport</keyword>
<dbReference type="EMBL" id="DQ897681">
    <property type="protein sequence ID" value="ABI17247.1"/>
    <property type="molecule type" value="Genomic_DNA"/>
</dbReference>
<dbReference type="RefSeq" id="YP_784056.1">
    <property type="nucleotide sequence ID" value="NC_008454.1"/>
</dbReference>
<dbReference type="SMR" id="Q06FX5"/>
<dbReference type="GeneID" id="4362766"/>
<dbReference type="GO" id="GO:0009535">
    <property type="term" value="C:chloroplast thylakoid membrane"/>
    <property type="evidence" value="ECO:0007669"/>
    <property type="project" value="UniProtKB-SubCell"/>
</dbReference>
<dbReference type="GO" id="GO:0045259">
    <property type="term" value="C:proton-transporting ATP synthase complex"/>
    <property type="evidence" value="ECO:0007669"/>
    <property type="project" value="UniProtKB-KW"/>
</dbReference>
<dbReference type="GO" id="GO:0046933">
    <property type="term" value="F:proton-transporting ATP synthase activity, rotational mechanism"/>
    <property type="evidence" value="ECO:0007669"/>
    <property type="project" value="UniProtKB-UniRule"/>
</dbReference>
<dbReference type="CDD" id="cd06503">
    <property type="entry name" value="ATP-synt_Fo_b"/>
    <property type="match status" value="1"/>
</dbReference>
<dbReference type="HAMAP" id="MF_01398">
    <property type="entry name" value="ATP_synth_b_bprime"/>
    <property type="match status" value="1"/>
</dbReference>
<dbReference type="InterPro" id="IPR002146">
    <property type="entry name" value="ATP_synth_b/b'su_bac/chlpt"/>
</dbReference>
<dbReference type="PANTHER" id="PTHR34264">
    <property type="entry name" value="ATP SYNTHASE SUBUNIT B, CHLOROPLASTIC"/>
    <property type="match status" value="1"/>
</dbReference>
<dbReference type="PANTHER" id="PTHR34264:SF3">
    <property type="entry name" value="ATP SYNTHASE SUBUNIT B, CHLOROPLASTIC"/>
    <property type="match status" value="1"/>
</dbReference>
<dbReference type="Pfam" id="PF00430">
    <property type="entry name" value="ATP-synt_B"/>
    <property type="match status" value="1"/>
</dbReference>
<feature type="chain" id="PRO_0000368967" description="ATP synthase subunit b, chloroplastic">
    <location>
        <begin position="1"/>
        <end position="184"/>
    </location>
</feature>
<feature type="transmembrane region" description="Helical" evidence="1">
    <location>
        <begin position="27"/>
        <end position="49"/>
    </location>
</feature>
<comment type="function">
    <text evidence="1">F(1)F(0) ATP synthase produces ATP from ADP in the presence of a proton or sodium gradient. F-type ATPases consist of two structural domains, F(1) containing the extramembraneous catalytic core and F(0) containing the membrane proton channel, linked together by a central stalk and a peripheral stalk. During catalysis, ATP synthesis in the catalytic domain of F(1) is coupled via a rotary mechanism of the central stalk subunits to proton translocation.</text>
</comment>
<comment type="function">
    <text evidence="1">Component of the F(0) channel, it forms part of the peripheral stalk, linking F(1) to F(0).</text>
</comment>
<comment type="subunit">
    <text evidence="1">F-type ATPases have 2 components, F(1) - the catalytic core - and F(0) - the membrane proton channel. F(1) has five subunits: alpha(3), beta(3), gamma(1), delta(1), epsilon(1). F(0) has four main subunits: a(1), b(1), b'(1) and c(10-14). The alpha and beta chains form an alternating ring which encloses part of the gamma chain. F(1) is attached to F(0) by a central stalk formed by the gamma and epsilon chains, while a peripheral stalk is formed by the delta, b and b' chains.</text>
</comment>
<comment type="subcellular location">
    <subcellularLocation>
        <location evidence="1">Plastid</location>
        <location evidence="1">Chloroplast thylakoid membrane</location>
        <topology evidence="1">Single-pass membrane protein</topology>
    </subcellularLocation>
</comment>
<comment type="miscellaneous">
    <text>In plastids the F-type ATPase is also known as CF(1)CF(0).</text>
</comment>
<comment type="similarity">
    <text evidence="1">Belongs to the ATPase B chain family.</text>
</comment>
<evidence type="ECO:0000255" key="1">
    <source>
        <dbReference type="HAMAP-Rule" id="MF_01398"/>
    </source>
</evidence>